<reference key="1">
    <citation type="journal article" date="2005" name="Jpn. Agric. Res. Q.">
        <title>Genome sequence of Xanthomonas oryzae pv. oryzae suggests contribution of large numbers of effector genes and insertion sequences to its race diversity.</title>
        <authorList>
            <person name="Ochiai H."/>
            <person name="Inoue Y."/>
            <person name="Takeya M."/>
            <person name="Sasaki A."/>
            <person name="Kaku H."/>
        </authorList>
    </citation>
    <scope>NUCLEOTIDE SEQUENCE [LARGE SCALE GENOMIC DNA]</scope>
    <source>
        <strain>MAFF 311018</strain>
    </source>
</reference>
<evidence type="ECO:0000255" key="1">
    <source>
        <dbReference type="HAMAP-Rule" id="MF_00262"/>
    </source>
</evidence>
<proteinExistence type="inferred from homology"/>
<feature type="chain" id="PRO_0000298221" description="Cell division topological specificity factor">
    <location>
        <begin position="1"/>
        <end position="85"/>
    </location>
</feature>
<organism>
    <name type="scientific">Xanthomonas oryzae pv. oryzae (strain MAFF 311018)</name>
    <dbReference type="NCBI Taxonomy" id="342109"/>
    <lineage>
        <taxon>Bacteria</taxon>
        <taxon>Pseudomonadati</taxon>
        <taxon>Pseudomonadota</taxon>
        <taxon>Gammaproteobacteria</taxon>
        <taxon>Lysobacterales</taxon>
        <taxon>Lysobacteraceae</taxon>
        <taxon>Xanthomonas</taxon>
    </lineage>
</organism>
<keyword id="KW-0131">Cell cycle</keyword>
<keyword id="KW-0132">Cell division</keyword>
<comment type="function">
    <text evidence="1">Prevents the cell division inhibition by proteins MinC and MinD at internal division sites while permitting inhibition at polar sites. This ensures cell division at the proper site by restricting the formation of a division septum at the midpoint of the long axis of the cell.</text>
</comment>
<comment type="similarity">
    <text evidence="1">Belongs to the MinE family.</text>
</comment>
<gene>
    <name evidence="1" type="primary">minE</name>
    <name type="ordered locus">XOO3338</name>
</gene>
<sequence>MGLLDFLKSKKNTAETAKNRLQIIIAQERNHRGGPDYLPLMQRELLEVIKKYVNIDADAVRVDLVKDGEHDVLDISVALPEDGDK</sequence>
<protein>
    <recommendedName>
        <fullName evidence="1">Cell division topological specificity factor</fullName>
    </recommendedName>
</protein>
<accession>Q2P034</accession>
<name>MINE_XANOM</name>
<dbReference type="EMBL" id="AP008229">
    <property type="protein sequence ID" value="BAE70093.1"/>
    <property type="molecule type" value="Genomic_DNA"/>
</dbReference>
<dbReference type="RefSeq" id="WP_003484370.1">
    <property type="nucleotide sequence ID" value="NC_007705.1"/>
</dbReference>
<dbReference type="SMR" id="Q2P034"/>
<dbReference type="GeneID" id="97509569"/>
<dbReference type="KEGG" id="xom:XOO3338"/>
<dbReference type="HOGENOM" id="CLU_137929_2_1_6"/>
<dbReference type="GO" id="GO:0051301">
    <property type="term" value="P:cell division"/>
    <property type="evidence" value="ECO:0007669"/>
    <property type="project" value="UniProtKB-KW"/>
</dbReference>
<dbReference type="GO" id="GO:0032955">
    <property type="term" value="P:regulation of division septum assembly"/>
    <property type="evidence" value="ECO:0007669"/>
    <property type="project" value="InterPro"/>
</dbReference>
<dbReference type="FunFam" id="3.30.1070.10:FF:000001">
    <property type="entry name" value="Cell division topological specificity factor"/>
    <property type="match status" value="1"/>
</dbReference>
<dbReference type="Gene3D" id="3.30.1070.10">
    <property type="entry name" value="Cell division topological specificity factor MinE"/>
    <property type="match status" value="1"/>
</dbReference>
<dbReference type="HAMAP" id="MF_00262">
    <property type="entry name" value="MinE"/>
    <property type="match status" value="1"/>
</dbReference>
<dbReference type="InterPro" id="IPR005527">
    <property type="entry name" value="MinE"/>
</dbReference>
<dbReference type="InterPro" id="IPR036707">
    <property type="entry name" value="MinE_sf"/>
</dbReference>
<dbReference type="NCBIfam" id="TIGR01215">
    <property type="entry name" value="minE"/>
    <property type="match status" value="1"/>
</dbReference>
<dbReference type="NCBIfam" id="NF001422">
    <property type="entry name" value="PRK00296.1"/>
    <property type="match status" value="1"/>
</dbReference>
<dbReference type="Pfam" id="PF03776">
    <property type="entry name" value="MinE"/>
    <property type="match status" value="1"/>
</dbReference>
<dbReference type="SUPFAM" id="SSF55229">
    <property type="entry name" value="Cell division protein MinE topological specificity domain"/>
    <property type="match status" value="1"/>
</dbReference>